<evidence type="ECO:0000255" key="1">
    <source>
        <dbReference type="HAMAP-Rule" id="MF_01270"/>
    </source>
</evidence>
<sequence>MKSGRFIGVMSGTSLDGVDVVLAAIDERMVAQQASYTHPIPLQLKKDILGMCQGQSTTLSAVGKLDAQLGILFAEAVLALLAKEGLSAQDITAIGCHGQTVWHEPLGEPAFTMQLGDNNRIAAMTQIATVGDFRRRDMAYGGQGAPLVPAFHHALLAHATEKRMVLNIGGIANLSVLLPDSPIRGFDTGPGNMLMDAWIWRNCSLPYDKDACWALSGHVNQPLLEQMFNDPYFRLPAPKSTGREYFNAAWLDKQLARIPGVTAEDIQATLAELTAVSITEQVRLAGGCDRLLVCGGGARNPLVMARISALLSGTEVCTTDDAGIRGDDMEALAFAWLAFRTLSGKPGNLPSVTGASRETILGAVHPVSSW</sequence>
<keyword id="KW-0067">ATP-binding</keyword>
<keyword id="KW-0119">Carbohydrate metabolism</keyword>
<keyword id="KW-0418">Kinase</keyword>
<keyword id="KW-0547">Nucleotide-binding</keyword>
<keyword id="KW-0808">Transferase</keyword>
<dbReference type="EC" id="2.7.1.170" evidence="1"/>
<dbReference type="EMBL" id="CP000720">
    <property type="protein sequence ID" value="ABS49062.1"/>
    <property type="molecule type" value="Genomic_DNA"/>
</dbReference>
<dbReference type="RefSeq" id="WP_002218322.1">
    <property type="nucleotide sequence ID" value="NC_009708.1"/>
</dbReference>
<dbReference type="SMR" id="A7FHL7"/>
<dbReference type="GeneID" id="57976303"/>
<dbReference type="KEGG" id="ypi:YpsIP31758_1770"/>
<dbReference type="HOGENOM" id="CLU_038782_0_0_6"/>
<dbReference type="UniPathway" id="UPA00343"/>
<dbReference type="UniPathway" id="UPA00544"/>
<dbReference type="Proteomes" id="UP000002412">
    <property type="component" value="Chromosome"/>
</dbReference>
<dbReference type="GO" id="GO:0005524">
    <property type="term" value="F:ATP binding"/>
    <property type="evidence" value="ECO:0007669"/>
    <property type="project" value="UniProtKB-UniRule"/>
</dbReference>
<dbReference type="GO" id="GO:0016301">
    <property type="term" value="F:kinase activity"/>
    <property type="evidence" value="ECO:0007669"/>
    <property type="project" value="UniProtKB-KW"/>
</dbReference>
<dbReference type="GO" id="GO:0016773">
    <property type="term" value="F:phosphotransferase activity, alcohol group as acceptor"/>
    <property type="evidence" value="ECO:0007669"/>
    <property type="project" value="UniProtKB-UniRule"/>
</dbReference>
<dbReference type="GO" id="GO:0097175">
    <property type="term" value="P:1,6-anhydro-N-acetyl-beta-muramic acid catabolic process"/>
    <property type="evidence" value="ECO:0007669"/>
    <property type="project" value="UniProtKB-UniRule"/>
</dbReference>
<dbReference type="GO" id="GO:0006040">
    <property type="term" value="P:amino sugar metabolic process"/>
    <property type="evidence" value="ECO:0007669"/>
    <property type="project" value="InterPro"/>
</dbReference>
<dbReference type="GO" id="GO:0009254">
    <property type="term" value="P:peptidoglycan turnover"/>
    <property type="evidence" value="ECO:0007669"/>
    <property type="project" value="UniProtKB-UniRule"/>
</dbReference>
<dbReference type="CDD" id="cd24050">
    <property type="entry name" value="ASKHA_NBD_ANMK"/>
    <property type="match status" value="1"/>
</dbReference>
<dbReference type="Gene3D" id="3.30.420.40">
    <property type="match status" value="2"/>
</dbReference>
<dbReference type="HAMAP" id="MF_01270">
    <property type="entry name" value="AnhMurNAc_kinase"/>
    <property type="match status" value="1"/>
</dbReference>
<dbReference type="InterPro" id="IPR005338">
    <property type="entry name" value="Anhydro_N_Ac-Mur_kinase"/>
</dbReference>
<dbReference type="InterPro" id="IPR043129">
    <property type="entry name" value="ATPase_NBD"/>
</dbReference>
<dbReference type="NCBIfam" id="NF007138">
    <property type="entry name" value="PRK09585.1-1"/>
    <property type="match status" value="1"/>
</dbReference>
<dbReference type="NCBIfam" id="NF007139">
    <property type="entry name" value="PRK09585.1-3"/>
    <property type="match status" value="1"/>
</dbReference>
<dbReference type="NCBIfam" id="NF007148">
    <property type="entry name" value="PRK09585.3-2"/>
    <property type="match status" value="1"/>
</dbReference>
<dbReference type="PANTHER" id="PTHR30605">
    <property type="entry name" value="ANHYDRO-N-ACETYLMURAMIC ACID KINASE"/>
    <property type="match status" value="1"/>
</dbReference>
<dbReference type="PANTHER" id="PTHR30605:SF0">
    <property type="entry name" value="ANHYDRO-N-ACETYLMURAMIC ACID KINASE"/>
    <property type="match status" value="1"/>
</dbReference>
<dbReference type="Pfam" id="PF03702">
    <property type="entry name" value="AnmK"/>
    <property type="match status" value="1"/>
</dbReference>
<dbReference type="SUPFAM" id="SSF53067">
    <property type="entry name" value="Actin-like ATPase domain"/>
    <property type="match status" value="1"/>
</dbReference>
<comment type="function">
    <text evidence="1">Catalyzes the specific phosphorylation of 1,6-anhydro-N-acetylmuramic acid (anhMurNAc) with the simultaneous cleavage of the 1,6-anhydro ring, generating MurNAc-6-P. Is required for the utilization of anhMurNAc either imported from the medium or derived from its own cell wall murein, and thus plays a role in cell wall recycling.</text>
</comment>
<comment type="catalytic activity">
    <reaction evidence="1">
        <text>1,6-anhydro-N-acetyl-beta-muramate + ATP + H2O = N-acetyl-D-muramate 6-phosphate + ADP + H(+)</text>
        <dbReference type="Rhea" id="RHEA:24952"/>
        <dbReference type="ChEBI" id="CHEBI:15377"/>
        <dbReference type="ChEBI" id="CHEBI:15378"/>
        <dbReference type="ChEBI" id="CHEBI:30616"/>
        <dbReference type="ChEBI" id="CHEBI:58690"/>
        <dbReference type="ChEBI" id="CHEBI:58722"/>
        <dbReference type="ChEBI" id="CHEBI:456216"/>
        <dbReference type="EC" id="2.7.1.170"/>
    </reaction>
</comment>
<comment type="pathway">
    <text evidence="1">Amino-sugar metabolism; 1,6-anhydro-N-acetylmuramate degradation.</text>
</comment>
<comment type="pathway">
    <text evidence="1">Cell wall biogenesis; peptidoglycan recycling.</text>
</comment>
<comment type="similarity">
    <text evidence="1">Belongs to the anhydro-N-acetylmuramic acid kinase family.</text>
</comment>
<name>ANMK_YERP3</name>
<protein>
    <recommendedName>
        <fullName evidence="1">Anhydro-N-acetylmuramic acid kinase</fullName>
        <ecNumber evidence="1">2.7.1.170</ecNumber>
    </recommendedName>
    <alternativeName>
        <fullName evidence="1">AnhMurNAc kinase</fullName>
    </alternativeName>
</protein>
<accession>A7FHL7</accession>
<organism>
    <name type="scientific">Yersinia pseudotuberculosis serotype O:1b (strain IP 31758)</name>
    <dbReference type="NCBI Taxonomy" id="349747"/>
    <lineage>
        <taxon>Bacteria</taxon>
        <taxon>Pseudomonadati</taxon>
        <taxon>Pseudomonadota</taxon>
        <taxon>Gammaproteobacteria</taxon>
        <taxon>Enterobacterales</taxon>
        <taxon>Yersiniaceae</taxon>
        <taxon>Yersinia</taxon>
    </lineage>
</organism>
<gene>
    <name evidence="1" type="primary">anmK</name>
    <name type="ordered locus">YpsIP31758_1770</name>
</gene>
<proteinExistence type="inferred from homology"/>
<feature type="chain" id="PRO_1000067374" description="Anhydro-N-acetylmuramic acid kinase">
    <location>
        <begin position="1"/>
        <end position="370"/>
    </location>
</feature>
<feature type="binding site" evidence="1">
    <location>
        <begin position="12"/>
        <end position="19"/>
    </location>
    <ligand>
        <name>ATP</name>
        <dbReference type="ChEBI" id="CHEBI:30616"/>
    </ligand>
</feature>
<reference key="1">
    <citation type="journal article" date="2007" name="PLoS Genet.">
        <title>The complete genome sequence of Yersinia pseudotuberculosis IP31758, the causative agent of Far East scarlet-like fever.</title>
        <authorList>
            <person name="Eppinger M."/>
            <person name="Rosovitz M.J."/>
            <person name="Fricke W.F."/>
            <person name="Rasko D.A."/>
            <person name="Kokorina G."/>
            <person name="Fayolle C."/>
            <person name="Lindler L.E."/>
            <person name="Carniel E."/>
            <person name="Ravel J."/>
        </authorList>
    </citation>
    <scope>NUCLEOTIDE SEQUENCE [LARGE SCALE GENOMIC DNA]</scope>
    <source>
        <strain>IP 31758</strain>
    </source>
</reference>